<accession>Q62JH0</accession>
<proteinExistence type="inferred from homology"/>
<keyword id="KW-0378">Hydrolase</keyword>
<keyword id="KW-0659">Purine metabolism</keyword>
<keyword id="KW-1185">Reference proteome</keyword>
<comment type="catalytic activity">
    <reaction evidence="1">
        <text>allantoate + H2O = (S)-ureidoglycolate + urea</text>
        <dbReference type="Rhea" id="RHEA:11016"/>
        <dbReference type="ChEBI" id="CHEBI:15377"/>
        <dbReference type="ChEBI" id="CHEBI:16199"/>
        <dbReference type="ChEBI" id="CHEBI:17536"/>
        <dbReference type="ChEBI" id="CHEBI:57296"/>
        <dbReference type="EC" id="3.5.3.4"/>
    </reaction>
</comment>
<comment type="pathway">
    <text evidence="1">Nitrogen metabolism; (S)-allantoin degradation; (S)-ureidoglycolate from allantoate (aminidohydrolase route): step 1/1.</text>
</comment>
<comment type="similarity">
    <text evidence="1">Belongs to the allantoicase family.</text>
</comment>
<evidence type="ECO:0000255" key="1">
    <source>
        <dbReference type="HAMAP-Rule" id="MF_00813"/>
    </source>
</evidence>
<name>ALLC1_BURMA</name>
<organism>
    <name type="scientific">Burkholderia mallei (strain ATCC 23344)</name>
    <dbReference type="NCBI Taxonomy" id="243160"/>
    <lineage>
        <taxon>Bacteria</taxon>
        <taxon>Pseudomonadati</taxon>
        <taxon>Pseudomonadota</taxon>
        <taxon>Betaproteobacteria</taxon>
        <taxon>Burkholderiales</taxon>
        <taxon>Burkholderiaceae</taxon>
        <taxon>Burkholderia</taxon>
        <taxon>pseudomallei group</taxon>
    </lineage>
</organism>
<protein>
    <recommendedName>
        <fullName evidence="1">Probable allantoicase 1</fullName>
        <ecNumber evidence="1">3.5.3.4</ecNumber>
    </recommendedName>
    <alternativeName>
        <fullName evidence="1">Allantoate amidinohydrolase 1</fullName>
    </alternativeName>
</protein>
<dbReference type="EC" id="3.5.3.4" evidence="1"/>
<dbReference type="EMBL" id="CP000010">
    <property type="protein sequence ID" value="AAU47713.1"/>
    <property type="molecule type" value="Genomic_DNA"/>
</dbReference>
<dbReference type="RefSeq" id="YP_103149.1">
    <property type="nucleotide sequence ID" value="NC_006348.1"/>
</dbReference>
<dbReference type="SMR" id="Q62JH0"/>
<dbReference type="KEGG" id="bma:BMA1505"/>
<dbReference type="PATRIC" id="fig|243160.12.peg.1550"/>
<dbReference type="eggNOG" id="COG4266">
    <property type="taxonomic scope" value="Bacteria"/>
</dbReference>
<dbReference type="HOGENOM" id="CLU_038797_1_2_4"/>
<dbReference type="UniPathway" id="UPA00395">
    <property type="reaction ID" value="UER00654"/>
</dbReference>
<dbReference type="Proteomes" id="UP000006693">
    <property type="component" value="Chromosome 1"/>
</dbReference>
<dbReference type="GO" id="GO:0004037">
    <property type="term" value="F:allantoicase activity"/>
    <property type="evidence" value="ECO:0007669"/>
    <property type="project" value="UniProtKB-UniRule"/>
</dbReference>
<dbReference type="GO" id="GO:0000256">
    <property type="term" value="P:allantoin catabolic process"/>
    <property type="evidence" value="ECO:0007669"/>
    <property type="project" value="UniProtKB-UniRule"/>
</dbReference>
<dbReference type="GO" id="GO:0006144">
    <property type="term" value="P:purine nucleobase metabolic process"/>
    <property type="evidence" value="ECO:0007669"/>
    <property type="project" value="UniProtKB-KW"/>
</dbReference>
<dbReference type="FunFam" id="2.60.120.260:FF:000059">
    <property type="entry name" value="Probable allantoicase"/>
    <property type="match status" value="1"/>
</dbReference>
<dbReference type="FunFam" id="2.60.120.260:FF:000090">
    <property type="entry name" value="Probable allantoicase"/>
    <property type="match status" value="1"/>
</dbReference>
<dbReference type="Gene3D" id="2.60.120.260">
    <property type="entry name" value="Galactose-binding domain-like"/>
    <property type="match status" value="2"/>
</dbReference>
<dbReference type="HAMAP" id="MF_00813">
    <property type="entry name" value="Allantoicase"/>
    <property type="match status" value="1"/>
</dbReference>
<dbReference type="InterPro" id="IPR005164">
    <property type="entry name" value="Allantoicase"/>
</dbReference>
<dbReference type="InterPro" id="IPR015908">
    <property type="entry name" value="Allantoicase_dom"/>
</dbReference>
<dbReference type="InterPro" id="IPR008979">
    <property type="entry name" value="Galactose-bd-like_sf"/>
</dbReference>
<dbReference type="NCBIfam" id="TIGR02961">
    <property type="entry name" value="allantoicase"/>
    <property type="match status" value="1"/>
</dbReference>
<dbReference type="PANTHER" id="PTHR12045">
    <property type="entry name" value="ALLANTOICASE"/>
    <property type="match status" value="1"/>
</dbReference>
<dbReference type="PANTHER" id="PTHR12045:SF3">
    <property type="entry name" value="INACTIVE ALLANTOICASE-RELATED"/>
    <property type="match status" value="1"/>
</dbReference>
<dbReference type="Pfam" id="PF03561">
    <property type="entry name" value="Allantoicase"/>
    <property type="match status" value="2"/>
</dbReference>
<dbReference type="PIRSF" id="PIRSF016516">
    <property type="entry name" value="Allantoicase"/>
    <property type="match status" value="1"/>
</dbReference>
<dbReference type="SUPFAM" id="SSF49785">
    <property type="entry name" value="Galactose-binding domain-like"/>
    <property type="match status" value="2"/>
</dbReference>
<reference key="1">
    <citation type="journal article" date="2004" name="Proc. Natl. Acad. Sci. U.S.A.">
        <title>Structural flexibility in the Burkholderia mallei genome.</title>
        <authorList>
            <person name="Nierman W.C."/>
            <person name="DeShazer D."/>
            <person name="Kim H.S."/>
            <person name="Tettelin H."/>
            <person name="Nelson K.E."/>
            <person name="Feldblyum T.V."/>
            <person name="Ulrich R.L."/>
            <person name="Ronning C.M."/>
            <person name="Brinkac L.M."/>
            <person name="Daugherty S.C."/>
            <person name="Davidsen T.D."/>
            <person name="DeBoy R.T."/>
            <person name="Dimitrov G."/>
            <person name="Dodson R.J."/>
            <person name="Durkin A.S."/>
            <person name="Gwinn M.L."/>
            <person name="Haft D.H."/>
            <person name="Khouri H.M."/>
            <person name="Kolonay J.F."/>
            <person name="Madupu R."/>
            <person name="Mohammoud Y."/>
            <person name="Nelson W.C."/>
            <person name="Radune D."/>
            <person name="Romero C.M."/>
            <person name="Sarria S."/>
            <person name="Selengut J."/>
            <person name="Shamblin C."/>
            <person name="Sullivan S.A."/>
            <person name="White O."/>
            <person name="Yu Y."/>
            <person name="Zafar N."/>
            <person name="Zhou L."/>
            <person name="Fraser C.M."/>
        </authorList>
    </citation>
    <scope>NUCLEOTIDE SEQUENCE [LARGE SCALE GENOMIC DNA]</scope>
    <source>
        <strain>ATCC 23344</strain>
    </source>
</reference>
<gene>
    <name evidence="1" type="primary">alc1</name>
    <name type="ordered locus">BMA1505</name>
</gene>
<sequence length="337" mass="37075">MALPLSDPNAPEFTRRYVNLADPRLGAQALEASDDFFAPKERMLNPEPAVFIPGKYDDHGKWMDGWETRRKRTTGYDWCVVKLARPGVIKGVDIDTSHFTGNFPPAASIEAAHVPDGAPNEATKWVEIVPATTLQGNSHHYVEARDANAYTHLRVNLYPDGGIARLRVYGQPQLDWAGASRSALFDLAAMENGGYVVAANNQHFGLASNVLLPGRGVNMGDGWETRRRREPGNDWAIVALAQPGVIRKVEIDTAHFKGNYPDRCSIQAAYVQGGTDSSLVTQAMFWPVLLGEQKLQMDKQHAFEAELAALGPVTHVRLNIIPDGGVSRLRVWGTLDK</sequence>
<feature type="chain" id="PRO_0000205917" description="Probable allantoicase 1">
    <location>
        <begin position="1"/>
        <end position="337"/>
    </location>
</feature>